<protein>
    <recommendedName>
        <fullName>NADH dehydrogenase [ubiquinone] 1 alpha subcomplex subunit 1</fullName>
    </recommendedName>
    <alternativeName>
        <fullName>Complex I-MWFE</fullName>
        <shortName>CI-MWFE</shortName>
    </alternativeName>
    <alternativeName>
        <fullName>NADH-ubiquinone oxidoreductase MWFE subunit</fullName>
    </alternativeName>
</protein>
<accession>Q02377</accession>
<accession>Q3ZC06</accession>
<comment type="function">
    <text evidence="1">Accessory subunit of the mitochondrial membrane respiratory chain NADH dehydrogenase (Complex I), that is believed not to be involved in catalysis. Complex I functions in the transfer of electrons from NADH to the respiratory chain. The immediate electron acceptor for the enzyme is believed to be ubiquinone.</text>
</comment>
<comment type="subunit">
    <text evidence="3">Complex I is composed of 45 different subunits.</text>
</comment>
<comment type="subcellular location">
    <subcellularLocation>
        <location evidence="5">Mitochondrion inner membrane</location>
        <topology evidence="2">Single-pass membrane protein</topology>
        <orientation evidence="4">Matrix side</orientation>
    </subcellularLocation>
</comment>
<comment type="similarity">
    <text evidence="4">Belongs to the complex I NDUFA1 subunit family.</text>
</comment>
<name>NDUA1_BOVIN</name>
<reference key="1">
    <citation type="journal article" date="1992" name="J. Mol. Biol.">
        <title>Sequences of 20 subunits of NADH:ubiquinone oxidoreductase from bovine heart mitochondria. Application of a novel strategy for sequencing proteins using the polymerase chain reaction.</title>
        <authorList>
            <person name="Walker J.E."/>
            <person name="Arizmendi J.M."/>
            <person name="Dupuis A."/>
            <person name="Fearnley I.M."/>
            <person name="Finel M."/>
            <person name="Medd S.M."/>
            <person name="Pilkington S.J."/>
            <person name="Runswick M.J."/>
            <person name="Skehel J.M."/>
        </authorList>
    </citation>
    <scope>NUCLEOTIDE SEQUENCE [MRNA]</scope>
    <scope>PROTEIN SEQUENCE OF 1-23</scope>
    <source>
        <tissue>Heart</tissue>
    </source>
</reference>
<reference key="2">
    <citation type="submission" date="2005-08" db="EMBL/GenBank/DDBJ databases">
        <authorList>
            <consortium name="NIH - Mammalian Gene Collection (MGC) project"/>
        </authorList>
    </citation>
    <scope>NUCLEOTIDE SEQUENCE [LARGE SCALE MRNA]</scope>
    <source>
        <strain>Hereford</strain>
        <tissue>Heart ventricle</tissue>
    </source>
</reference>
<reference key="3">
    <citation type="journal article" date="2008" name="Anal. Biochem.">
        <title>Subunit analysis of bovine heart complex I by reversed-phase high-performance liquid chromatography, electrospray ionization-tandem mass spectrometry, and matrix-assisted laser desorption/ionization-time-of-flight mass spectrometry.</title>
        <authorList>
            <person name="Lemma-Gray P."/>
            <person name="Valusova E."/>
            <person name="Carroll C.A."/>
            <person name="Weintraub S.T."/>
            <person name="Musatov A."/>
            <person name="Robinson N.C."/>
        </authorList>
    </citation>
    <scope>SUBUNIT</scope>
    <scope>IDENTIFICATION IN COMPLEX I</scope>
    <scope>SUBCELLULAR LOCATION</scope>
</reference>
<proteinExistence type="evidence at protein level"/>
<dbReference type="EMBL" id="X63222">
    <property type="protein sequence ID" value="CAA44907.1"/>
    <property type="molecule type" value="mRNA"/>
</dbReference>
<dbReference type="EMBL" id="BC102993">
    <property type="protein sequence ID" value="AAI02994.1"/>
    <property type="molecule type" value="mRNA"/>
</dbReference>
<dbReference type="PIR" id="S28252">
    <property type="entry name" value="S28252"/>
</dbReference>
<dbReference type="RefSeq" id="NP_786988.1">
    <property type="nucleotide sequence ID" value="NM_175794.2"/>
</dbReference>
<dbReference type="PDB" id="5LC5">
    <property type="method" value="EM"/>
    <property type="resolution" value="4.35 A"/>
    <property type="chains" value="a=1-70"/>
</dbReference>
<dbReference type="PDB" id="5LDW">
    <property type="method" value="EM"/>
    <property type="resolution" value="4.27 A"/>
    <property type="chains" value="a=1-70"/>
</dbReference>
<dbReference type="PDB" id="5LDX">
    <property type="method" value="EM"/>
    <property type="resolution" value="5.60 A"/>
    <property type="chains" value="a=1-70"/>
</dbReference>
<dbReference type="PDB" id="5LNK">
    <property type="method" value="EM"/>
    <property type="resolution" value="3.90 A"/>
    <property type="chains" value="z=1-70"/>
</dbReference>
<dbReference type="PDB" id="5O31">
    <property type="method" value="EM"/>
    <property type="resolution" value="4.13 A"/>
    <property type="chains" value="a=1-70"/>
</dbReference>
<dbReference type="PDB" id="7DGQ">
    <property type="method" value="EM"/>
    <property type="resolution" value="5.00 A"/>
    <property type="chains" value="J=1-70"/>
</dbReference>
<dbReference type="PDB" id="7DGR">
    <property type="method" value="EM"/>
    <property type="resolution" value="4.60 A"/>
    <property type="chains" value="J=1-70"/>
</dbReference>
<dbReference type="PDB" id="7DGS">
    <property type="method" value="EM"/>
    <property type="resolution" value="7.80 A"/>
    <property type="chains" value="J=1-70"/>
</dbReference>
<dbReference type="PDB" id="7DGZ">
    <property type="method" value="EM"/>
    <property type="resolution" value="3.80 A"/>
    <property type="chains" value="J=1-70"/>
</dbReference>
<dbReference type="PDB" id="7DH0">
    <property type="method" value="EM"/>
    <property type="resolution" value="4.20 A"/>
    <property type="chains" value="J=1-70"/>
</dbReference>
<dbReference type="PDB" id="7DKF">
    <property type="method" value="EM"/>
    <property type="resolution" value="8.30 A"/>
    <property type="chains" value="J2=1-70"/>
</dbReference>
<dbReference type="PDB" id="7QSD">
    <property type="method" value="EM"/>
    <property type="resolution" value="3.10 A"/>
    <property type="chains" value="a=1-70"/>
</dbReference>
<dbReference type="PDB" id="7QSK">
    <property type="method" value="EM"/>
    <property type="resolution" value="2.84 A"/>
    <property type="chains" value="a=1-70"/>
</dbReference>
<dbReference type="PDB" id="7QSL">
    <property type="method" value="EM"/>
    <property type="resolution" value="2.76 A"/>
    <property type="chains" value="a=1-70"/>
</dbReference>
<dbReference type="PDB" id="7QSM">
    <property type="method" value="EM"/>
    <property type="resolution" value="2.30 A"/>
    <property type="chains" value="a=1-70"/>
</dbReference>
<dbReference type="PDB" id="7QSN">
    <property type="method" value="EM"/>
    <property type="resolution" value="2.81 A"/>
    <property type="chains" value="a=1-70"/>
</dbReference>
<dbReference type="PDB" id="7QSO">
    <property type="method" value="EM"/>
    <property type="resolution" value="3.02 A"/>
    <property type="chains" value="a=1-70"/>
</dbReference>
<dbReference type="PDB" id="7R41">
    <property type="method" value="EM"/>
    <property type="resolution" value="2.30 A"/>
    <property type="chains" value="a=1-70"/>
</dbReference>
<dbReference type="PDB" id="7R42">
    <property type="method" value="EM"/>
    <property type="resolution" value="2.30 A"/>
    <property type="chains" value="a=1-70"/>
</dbReference>
<dbReference type="PDB" id="7R43">
    <property type="method" value="EM"/>
    <property type="resolution" value="2.40 A"/>
    <property type="chains" value="a=1-70"/>
</dbReference>
<dbReference type="PDB" id="7R44">
    <property type="method" value="EM"/>
    <property type="resolution" value="2.40 A"/>
    <property type="chains" value="a=1-70"/>
</dbReference>
<dbReference type="PDB" id="7R45">
    <property type="method" value="EM"/>
    <property type="resolution" value="2.40 A"/>
    <property type="chains" value="a=1-70"/>
</dbReference>
<dbReference type="PDB" id="7R46">
    <property type="method" value="EM"/>
    <property type="resolution" value="2.40 A"/>
    <property type="chains" value="a=1-70"/>
</dbReference>
<dbReference type="PDB" id="7R47">
    <property type="method" value="EM"/>
    <property type="resolution" value="2.30 A"/>
    <property type="chains" value="a=1-70"/>
</dbReference>
<dbReference type="PDB" id="7R48">
    <property type="method" value="EM"/>
    <property type="resolution" value="2.30 A"/>
    <property type="chains" value="a=1-70"/>
</dbReference>
<dbReference type="PDB" id="7R4C">
    <property type="method" value="EM"/>
    <property type="resolution" value="2.30 A"/>
    <property type="chains" value="a=1-70"/>
</dbReference>
<dbReference type="PDB" id="7R4D">
    <property type="method" value="EM"/>
    <property type="resolution" value="2.30 A"/>
    <property type="chains" value="a=1-70"/>
</dbReference>
<dbReference type="PDB" id="7R4F">
    <property type="method" value="EM"/>
    <property type="resolution" value="2.40 A"/>
    <property type="chains" value="a=1-70"/>
</dbReference>
<dbReference type="PDB" id="7R4G">
    <property type="method" value="EM"/>
    <property type="resolution" value="2.50 A"/>
    <property type="chains" value="a=1-70"/>
</dbReference>
<dbReference type="PDB" id="8Q0A">
    <property type="method" value="EM"/>
    <property type="resolution" value="3.10 A"/>
    <property type="chains" value="a=1-70"/>
</dbReference>
<dbReference type="PDB" id="8Q0F">
    <property type="method" value="EM"/>
    <property type="resolution" value="3.10 A"/>
    <property type="chains" value="a=1-70"/>
</dbReference>
<dbReference type="PDB" id="8Q0J">
    <property type="method" value="EM"/>
    <property type="resolution" value="3.80 A"/>
    <property type="chains" value="a=1-70"/>
</dbReference>
<dbReference type="PDB" id="8Q0M">
    <property type="method" value="EM"/>
    <property type="resolution" value="3.10 A"/>
    <property type="chains" value="a=1-70"/>
</dbReference>
<dbReference type="PDB" id="8Q0O">
    <property type="method" value="EM"/>
    <property type="resolution" value="3.10 A"/>
    <property type="chains" value="a=1-70"/>
</dbReference>
<dbReference type="PDB" id="8Q0Q">
    <property type="method" value="EM"/>
    <property type="resolution" value="3.60 A"/>
    <property type="chains" value="a=1-70"/>
</dbReference>
<dbReference type="PDB" id="8Q1P">
    <property type="method" value="EM"/>
    <property type="resolution" value="2.90 A"/>
    <property type="chains" value="a=1-70"/>
</dbReference>
<dbReference type="PDB" id="8Q1U">
    <property type="method" value="EM"/>
    <property type="resolution" value="3.30 A"/>
    <property type="chains" value="a=1-70"/>
</dbReference>
<dbReference type="PDB" id="8Q1Y">
    <property type="method" value="EM"/>
    <property type="resolution" value="2.60 A"/>
    <property type="chains" value="a=1-70"/>
</dbReference>
<dbReference type="PDB" id="8Q25">
    <property type="method" value="EM"/>
    <property type="resolution" value="2.80 A"/>
    <property type="chains" value="a=1-70"/>
</dbReference>
<dbReference type="PDB" id="8Q45">
    <property type="method" value="EM"/>
    <property type="resolution" value="2.70 A"/>
    <property type="chains" value="a=1-70"/>
</dbReference>
<dbReference type="PDB" id="8Q46">
    <property type="method" value="EM"/>
    <property type="resolution" value="2.60 A"/>
    <property type="chains" value="a=1-70"/>
</dbReference>
<dbReference type="PDB" id="8Q47">
    <property type="method" value="EM"/>
    <property type="resolution" value="2.90 A"/>
    <property type="chains" value="a=1-70"/>
</dbReference>
<dbReference type="PDB" id="8Q48">
    <property type="method" value="EM"/>
    <property type="resolution" value="2.50 A"/>
    <property type="chains" value="a=1-70"/>
</dbReference>
<dbReference type="PDB" id="8Q49">
    <property type="method" value="EM"/>
    <property type="resolution" value="2.60 A"/>
    <property type="chains" value="a=1-70"/>
</dbReference>
<dbReference type="PDB" id="8Q4A">
    <property type="method" value="EM"/>
    <property type="resolution" value="2.60 A"/>
    <property type="chains" value="a=1-70"/>
</dbReference>
<dbReference type="PDBsum" id="5LC5"/>
<dbReference type="PDBsum" id="5LDW"/>
<dbReference type="PDBsum" id="5LDX"/>
<dbReference type="PDBsum" id="5LNK"/>
<dbReference type="PDBsum" id="5O31"/>
<dbReference type="PDBsum" id="7DGQ"/>
<dbReference type="PDBsum" id="7DGR"/>
<dbReference type="PDBsum" id="7DGS"/>
<dbReference type="PDBsum" id="7DGZ"/>
<dbReference type="PDBsum" id="7DH0"/>
<dbReference type="PDBsum" id="7DKF"/>
<dbReference type="PDBsum" id="7QSD"/>
<dbReference type="PDBsum" id="7QSK"/>
<dbReference type="PDBsum" id="7QSL"/>
<dbReference type="PDBsum" id="7QSM"/>
<dbReference type="PDBsum" id="7QSN"/>
<dbReference type="PDBsum" id="7QSO"/>
<dbReference type="PDBsum" id="7R41"/>
<dbReference type="PDBsum" id="7R42"/>
<dbReference type="PDBsum" id="7R43"/>
<dbReference type="PDBsum" id="7R44"/>
<dbReference type="PDBsum" id="7R45"/>
<dbReference type="PDBsum" id="7R46"/>
<dbReference type="PDBsum" id="7R47"/>
<dbReference type="PDBsum" id="7R48"/>
<dbReference type="PDBsum" id="7R4C"/>
<dbReference type="PDBsum" id="7R4D"/>
<dbReference type="PDBsum" id="7R4F"/>
<dbReference type="PDBsum" id="7R4G"/>
<dbReference type="PDBsum" id="8Q0A"/>
<dbReference type="PDBsum" id="8Q0F"/>
<dbReference type="PDBsum" id="8Q0J"/>
<dbReference type="PDBsum" id="8Q0M"/>
<dbReference type="PDBsum" id="8Q0O"/>
<dbReference type="PDBsum" id="8Q0Q"/>
<dbReference type="PDBsum" id="8Q1P"/>
<dbReference type="PDBsum" id="8Q1U"/>
<dbReference type="PDBsum" id="8Q1Y"/>
<dbReference type="PDBsum" id="8Q25"/>
<dbReference type="PDBsum" id="8Q45"/>
<dbReference type="PDBsum" id="8Q46"/>
<dbReference type="PDBsum" id="8Q47"/>
<dbReference type="PDBsum" id="8Q48"/>
<dbReference type="PDBsum" id="8Q49"/>
<dbReference type="PDBsum" id="8Q4A"/>
<dbReference type="EMDB" id="EMD-18051"/>
<dbReference type="EMDB" id="EMD-18052"/>
<dbReference type="EMDB" id="EMD-18054"/>
<dbReference type="EMDB" id="EMD-18055"/>
<dbReference type="EMDB" id="EMD-18057"/>
<dbReference type="EMDB" id="EMD-18059"/>
<dbReference type="EMDB" id="EMD-18066"/>
<dbReference type="EMDB" id="EMD-18067"/>
<dbReference type="EMDB" id="EMD-18068"/>
<dbReference type="EMDB" id="EMD-18069"/>
<dbReference type="EMDB" id="EMD-18138"/>
<dbReference type="EMDB" id="EMD-18139"/>
<dbReference type="EMDB" id="EMD-18140"/>
<dbReference type="EMDB" id="EMD-18141"/>
<dbReference type="EMDB" id="EMD-18142"/>
<dbReference type="EMDB" id="EMD-18143"/>
<dbReference type="EMDB" id="EMD-30673"/>
<dbReference type="EMDB" id="EMD-30676"/>
<dbReference type="EMDB" id="EMD-3731"/>
<dbReference type="EMDB" id="EMD-4032"/>
<dbReference type="EMDB" id="EMD-4040"/>
<dbReference type="EMDB" id="EMD-4041"/>
<dbReference type="SMR" id="Q02377"/>
<dbReference type="CORUM" id="Q02377"/>
<dbReference type="DIP" id="DIP-38822N"/>
<dbReference type="FunCoup" id="Q02377">
    <property type="interactions" value="361"/>
</dbReference>
<dbReference type="IntAct" id="Q02377">
    <property type="interactions" value="1"/>
</dbReference>
<dbReference type="STRING" id="9913.ENSBTAP00000007925"/>
<dbReference type="TCDB" id="3.D.1.6.1">
    <property type="family name" value="the h+ or na+-translocating nadh dehydrogenase (ndh) family"/>
</dbReference>
<dbReference type="iPTMnet" id="Q02377"/>
<dbReference type="PaxDb" id="9913-ENSBTAP00000007925"/>
<dbReference type="Ensembl" id="ENSBTAT00000007925.6">
    <property type="protein sequence ID" value="ENSBTAP00000007925.5"/>
    <property type="gene ID" value="ENSBTAG00000006033.6"/>
</dbReference>
<dbReference type="GeneID" id="327673"/>
<dbReference type="KEGG" id="bta:327673"/>
<dbReference type="CTD" id="4694"/>
<dbReference type="VEuPathDB" id="HostDB:ENSBTAG00000006033"/>
<dbReference type="VGNC" id="VGNC:31944">
    <property type="gene designation" value="NDUFA1"/>
</dbReference>
<dbReference type="eggNOG" id="ENOG502S3S5">
    <property type="taxonomic scope" value="Eukaryota"/>
</dbReference>
<dbReference type="GeneTree" id="ENSGT00390000007560"/>
<dbReference type="HOGENOM" id="CLU_185502_2_0_1"/>
<dbReference type="InParanoid" id="Q02377"/>
<dbReference type="OMA" id="WALMERD"/>
<dbReference type="OrthoDB" id="1920692at2759"/>
<dbReference type="TreeFam" id="TF333394"/>
<dbReference type="Reactome" id="R-BTA-611105">
    <property type="pathway name" value="Respiratory electron transport"/>
</dbReference>
<dbReference type="Reactome" id="R-BTA-6799198">
    <property type="pathway name" value="Complex I biogenesis"/>
</dbReference>
<dbReference type="Proteomes" id="UP000009136">
    <property type="component" value="Chromosome X"/>
</dbReference>
<dbReference type="Bgee" id="ENSBTAG00000006033">
    <property type="expression patterns" value="Expressed in retina and 105 other cell types or tissues"/>
</dbReference>
<dbReference type="GO" id="GO:0005743">
    <property type="term" value="C:mitochondrial inner membrane"/>
    <property type="evidence" value="ECO:0007669"/>
    <property type="project" value="UniProtKB-SubCell"/>
</dbReference>
<dbReference type="GO" id="GO:0005739">
    <property type="term" value="C:mitochondrion"/>
    <property type="evidence" value="ECO:0000305"/>
    <property type="project" value="UniProtKB"/>
</dbReference>
<dbReference type="GO" id="GO:0045271">
    <property type="term" value="C:respiratory chain complex I"/>
    <property type="evidence" value="ECO:0000314"/>
    <property type="project" value="UniProtKB"/>
</dbReference>
<dbReference type="InterPro" id="IPR017384">
    <property type="entry name" value="NADH_Ub_cplx-1_asu_su-1"/>
</dbReference>
<dbReference type="PANTHER" id="PTHR17098:SF2">
    <property type="entry name" value="NADH DEHYDROGENASE [UBIQUINONE] 1 ALPHA SUBCOMPLEX SUBUNIT 1"/>
    <property type="match status" value="1"/>
</dbReference>
<dbReference type="PANTHER" id="PTHR17098">
    <property type="entry name" value="NADH-UBIQUINONE OXIDOREDUCTASE MWFE SUBUNIT"/>
    <property type="match status" value="1"/>
</dbReference>
<dbReference type="Pfam" id="PF15879">
    <property type="entry name" value="MWFE"/>
    <property type="match status" value="1"/>
</dbReference>
<dbReference type="PIRSF" id="PIRSF038095">
    <property type="entry name" value="NDUA1"/>
    <property type="match status" value="1"/>
</dbReference>
<evidence type="ECO:0000250" key="1">
    <source>
        <dbReference type="UniProtKB" id="O15239"/>
    </source>
</evidence>
<evidence type="ECO:0000255" key="2"/>
<evidence type="ECO:0000269" key="3">
    <source>
    </source>
</evidence>
<evidence type="ECO:0000305" key="4"/>
<evidence type="ECO:0000305" key="5">
    <source>
    </source>
</evidence>
<evidence type="ECO:0007829" key="6">
    <source>
        <dbReference type="PDB" id="7QSM"/>
    </source>
</evidence>
<organism>
    <name type="scientific">Bos taurus</name>
    <name type="common">Bovine</name>
    <dbReference type="NCBI Taxonomy" id="9913"/>
    <lineage>
        <taxon>Eukaryota</taxon>
        <taxon>Metazoa</taxon>
        <taxon>Chordata</taxon>
        <taxon>Craniata</taxon>
        <taxon>Vertebrata</taxon>
        <taxon>Euteleostomi</taxon>
        <taxon>Mammalia</taxon>
        <taxon>Eutheria</taxon>
        <taxon>Laurasiatheria</taxon>
        <taxon>Artiodactyla</taxon>
        <taxon>Ruminantia</taxon>
        <taxon>Pecora</taxon>
        <taxon>Bovidae</taxon>
        <taxon>Bovinae</taxon>
        <taxon>Bos</taxon>
    </lineage>
</organism>
<sequence length="70" mass="8105">MWFEVLPGIAVMGVCLFIPGMATARIHRFSNGGKEKRVAHYPYQWYLMERDRRVSGVNRSYVSKGLENID</sequence>
<gene>
    <name type="primary">NDUFA1</name>
</gene>
<feature type="chain" id="PRO_0000118814" description="NADH dehydrogenase [ubiquinone] 1 alpha subcomplex subunit 1">
    <location>
        <begin position="1"/>
        <end position="70"/>
    </location>
</feature>
<feature type="transmembrane region" description="Helical" evidence="2">
    <location>
        <begin position="1"/>
        <end position="21"/>
    </location>
</feature>
<feature type="helix" evidence="6">
    <location>
        <begin position="2"/>
        <end position="4"/>
    </location>
</feature>
<feature type="helix" evidence="6">
    <location>
        <begin position="6"/>
        <end position="30"/>
    </location>
</feature>
<feature type="turn" evidence="6">
    <location>
        <begin position="31"/>
        <end position="33"/>
    </location>
</feature>
<feature type="helix" evidence="6">
    <location>
        <begin position="42"/>
        <end position="55"/>
    </location>
</feature>
<feature type="strand" evidence="6">
    <location>
        <begin position="56"/>
        <end position="58"/>
    </location>
</feature>
<feature type="helix" evidence="6">
    <location>
        <begin position="66"/>
        <end position="68"/>
    </location>
</feature>
<keyword id="KW-0002">3D-structure</keyword>
<keyword id="KW-0903">Direct protein sequencing</keyword>
<keyword id="KW-0249">Electron transport</keyword>
<keyword id="KW-0472">Membrane</keyword>
<keyword id="KW-0496">Mitochondrion</keyword>
<keyword id="KW-0999">Mitochondrion inner membrane</keyword>
<keyword id="KW-1185">Reference proteome</keyword>
<keyword id="KW-0679">Respiratory chain</keyword>
<keyword id="KW-0812">Transmembrane</keyword>
<keyword id="KW-1133">Transmembrane helix</keyword>
<keyword id="KW-0813">Transport</keyword>